<protein>
    <recommendedName>
        <fullName evidence="2">Small ribosomal subunit protein uS12c</fullName>
    </recommendedName>
    <alternativeName>
        <fullName>30S ribosomal protein S12, chloroplastic</fullName>
    </alternativeName>
</protein>
<keyword id="KW-0150">Chloroplast</keyword>
<keyword id="KW-0934">Plastid</keyword>
<keyword id="KW-0687">Ribonucleoprotein</keyword>
<keyword id="KW-0689">Ribosomal protein</keyword>
<keyword id="KW-0694">RNA-binding</keyword>
<keyword id="KW-0699">rRNA-binding</keyword>
<organism>
    <name type="scientific">Adiantum capillus-veneris</name>
    <name type="common">Maidenhair fern</name>
    <dbReference type="NCBI Taxonomy" id="13818"/>
    <lineage>
        <taxon>Eukaryota</taxon>
        <taxon>Viridiplantae</taxon>
        <taxon>Streptophyta</taxon>
        <taxon>Embryophyta</taxon>
        <taxon>Tracheophyta</taxon>
        <taxon>Polypodiopsida</taxon>
        <taxon>Polypodiidae</taxon>
        <taxon>Polypodiales</taxon>
        <taxon>Pteridineae</taxon>
        <taxon>Pteridaceae</taxon>
        <taxon>Vittarioideae</taxon>
        <taxon>Adiantum</taxon>
    </lineage>
</organism>
<proteinExistence type="evidence at transcript level"/>
<evidence type="ECO:0000250" key="1"/>
<evidence type="ECO:0000305" key="2"/>
<comment type="function">
    <text evidence="1">With S4 and S5 plays an important role in translational accuracy. Located at the interface of the 30S and 50S subunits (By similarity).</text>
</comment>
<comment type="subunit">
    <text>Part of the 30S ribosomal subunit.</text>
</comment>
<comment type="subcellular location">
    <subcellularLocation>
        <location>Plastid</location>
        <location>Chloroplast</location>
    </subcellularLocation>
</comment>
<comment type="similarity">
    <text evidence="2">Belongs to the universal ribosomal protein uS12 family.</text>
</comment>
<reference key="1">
    <citation type="journal article" date="2003" name="DNA Res.">
        <title>Complete nucleotide sequence of the chloroplast genome from a leptosporangiate fern, Adiantum capillus-veneris L.</title>
        <authorList>
            <person name="Wolf P.G."/>
            <person name="Rowe C.A."/>
            <person name="Sinclair R.B."/>
            <person name="Hasebe M."/>
        </authorList>
    </citation>
    <scope>NUCLEOTIDE SEQUENCE [LARGE SCALE GENOMIC DNA]</scope>
</reference>
<reference key="2">
    <citation type="journal article" date="2004" name="Gene">
        <title>High levels of RNA editing in a vascular plant chloroplast genome: analysis of transcripts from the fern Adiantum capillus-veneris.</title>
        <authorList>
            <person name="Wolf P.G."/>
            <person name="Rowe C.A."/>
            <person name="Hasebe M."/>
        </authorList>
    </citation>
    <scope>NUCLEOTIDE SEQUENCE [GENOMIC DNA]</scope>
    <scope>ABSENCE OF RNA EDITING</scope>
    <source>
        <tissue>Frond</tissue>
    </source>
</reference>
<sequence length="135" mass="14984">MPTNQQLIRKARQRLESGTKSPALRGCPQRRGVCTRVYTTTPKKPNSALRKVARVRLTSKFEVTAYIPGIGHNLQEHSVVLVRGGRVKDLPGVRYHIVRGALDAVGVKDRKKGRSSALQSIVATRIIATIPYQLF</sequence>
<name>RR12_ADICA</name>
<accession>Q85FG4</accession>
<dbReference type="EMBL" id="AY178864">
    <property type="protein sequence ID" value="AAP29455.2"/>
    <property type="molecule type" value="Genomic_DNA"/>
</dbReference>
<dbReference type="RefSeq" id="NP_848037.1">
    <property type="nucleotide sequence ID" value="NC_004766.1"/>
</dbReference>
<dbReference type="SMR" id="Q85FG4"/>
<dbReference type="GeneID" id="807336"/>
<dbReference type="GO" id="GO:0009507">
    <property type="term" value="C:chloroplast"/>
    <property type="evidence" value="ECO:0007669"/>
    <property type="project" value="UniProtKB-SubCell"/>
</dbReference>
<dbReference type="GO" id="GO:0015935">
    <property type="term" value="C:small ribosomal subunit"/>
    <property type="evidence" value="ECO:0007669"/>
    <property type="project" value="InterPro"/>
</dbReference>
<dbReference type="GO" id="GO:0019843">
    <property type="term" value="F:rRNA binding"/>
    <property type="evidence" value="ECO:0007669"/>
    <property type="project" value="UniProtKB-UniRule"/>
</dbReference>
<dbReference type="GO" id="GO:0003735">
    <property type="term" value="F:structural constituent of ribosome"/>
    <property type="evidence" value="ECO:0007669"/>
    <property type="project" value="InterPro"/>
</dbReference>
<dbReference type="GO" id="GO:0006412">
    <property type="term" value="P:translation"/>
    <property type="evidence" value="ECO:0007669"/>
    <property type="project" value="UniProtKB-UniRule"/>
</dbReference>
<dbReference type="CDD" id="cd03368">
    <property type="entry name" value="Ribosomal_S12"/>
    <property type="match status" value="1"/>
</dbReference>
<dbReference type="FunFam" id="2.40.50.140:FF:000001">
    <property type="entry name" value="30S ribosomal protein S12"/>
    <property type="match status" value="1"/>
</dbReference>
<dbReference type="Gene3D" id="2.40.50.140">
    <property type="entry name" value="Nucleic acid-binding proteins"/>
    <property type="match status" value="1"/>
</dbReference>
<dbReference type="HAMAP" id="MF_00403_B">
    <property type="entry name" value="Ribosomal_uS12_B"/>
    <property type="match status" value="1"/>
</dbReference>
<dbReference type="InterPro" id="IPR012340">
    <property type="entry name" value="NA-bd_OB-fold"/>
</dbReference>
<dbReference type="InterPro" id="IPR006032">
    <property type="entry name" value="Ribosomal_uS12"/>
</dbReference>
<dbReference type="InterPro" id="IPR005679">
    <property type="entry name" value="Ribosomal_uS12_bac"/>
</dbReference>
<dbReference type="NCBIfam" id="TIGR00981">
    <property type="entry name" value="rpsL_bact"/>
    <property type="match status" value="1"/>
</dbReference>
<dbReference type="PANTHER" id="PTHR11652">
    <property type="entry name" value="30S RIBOSOMAL PROTEIN S12 FAMILY MEMBER"/>
    <property type="match status" value="1"/>
</dbReference>
<dbReference type="Pfam" id="PF00164">
    <property type="entry name" value="Ribosom_S12_S23"/>
    <property type="match status" value="1"/>
</dbReference>
<dbReference type="PIRSF" id="PIRSF002133">
    <property type="entry name" value="Ribosomal_S12/S23"/>
    <property type="match status" value="1"/>
</dbReference>
<dbReference type="PRINTS" id="PR01034">
    <property type="entry name" value="RIBOSOMALS12"/>
</dbReference>
<dbReference type="SUPFAM" id="SSF50249">
    <property type="entry name" value="Nucleic acid-binding proteins"/>
    <property type="match status" value="1"/>
</dbReference>
<dbReference type="PROSITE" id="PS00055">
    <property type="entry name" value="RIBOSOMAL_S12"/>
    <property type="match status" value="1"/>
</dbReference>
<feature type="chain" id="PRO_0000146388" description="Small ribosomal subunit protein uS12c">
    <location>
        <begin position="1"/>
        <end position="135"/>
    </location>
</feature>
<gene>
    <name type="primary">rps12</name>
</gene>
<geneLocation type="chloroplast"/>